<protein>
    <recommendedName>
        <fullName evidence="1">TDP-N-acetylfucosamine:lipid II N-acetylfucosaminyltransferase</fullName>
        <ecNumber evidence="1">2.4.1.325</ecNumber>
    </recommendedName>
    <alternativeName>
        <fullName evidence="1">4-alpha-L-fucosyltransferase</fullName>
    </alternativeName>
    <alternativeName>
        <fullName evidence="1">TDP-Fuc4NAc:lipid II Fuc4NAc transferase</fullName>
        <shortName evidence="1">Fuc4NAc transferase</shortName>
    </alternativeName>
</protein>
<dbReference type="EC" id="2.4.1.325" evidence="1"/>
<dbReference type="EMBL" id="CP001127">
    <property type="protein sequence ID" value="ACF92917.1"/>
    <property type="molecule type" value="Genomic_DNA"/>
</dbReference>
<dbReference type="RefSeq" id="WP_000217190.1">
    <property type="nucleotide sequence ID" value="NC_011094.1"/>
</dbReference>
<dbReference type="SMR" id="B4TNU5"/>
<dbReference type="CAZy" id="GT56">
    <property type="family name" value="Glycosyltransferase Family 56"/>
</dbReference>
<dbReference type="KEGG" id="sew:SeSA_A4138"/>
<dbReference type="HOGENOM" id="CLU_066584_0_0_6"/>
<dbReference type="UniPathway" id="UPA00566"/>
<dbReference type="Proteomes" id="UP000001865">
    <property type="component" value="Chromosome"/>
</dbReference>
<dbReference type="GO" id="GO:0005886">
    <property type="term" value="C:plasma membrane"/>
    <property type="evidence" value="ECO:0007669"/>
    <property type="project" value="UniProtKB-SubCell"/>
</dbReference>
<dbReference type="GO" id="GO:0102031">
    <property type="term" value="F:4-acetamido-4,6-dideoxy-D-galactose transferase activity"/>
    <property type="evidence" value="ECO:0007669"/>
    <property type="project" value="UniProtKB-EC"/>
</dbReference>
<dbReference type="GO" id="GO:0008417">
    <property type="term" value="F:fucosyltransferase activity"/>
    <property type="evidence" value="ECO:0007669"/>
    <property type="project" value="InterPro"/>
</dbReference>
<dbReference type="GO" id="GO:0009246">
    <property type="term" value="P:enterobacterial common antigen biosynthetic process"/>
    <property type="evidence" value="ECO:0007669"/>
    <property type="project" value="UniProtKB-UniRule"/>
</dbReference>
<dbReference type="GO" id="GO:0036065">
    <property type="term" value="P:fucosylation"/>
    <property type="evidence" value="ECO:0007669"/>
    <property type="project" value="InterPro"/>
</dbReference>
<dbReference type="HAMAP" id="MF_01002">
    <property type="entry name" value="WecF_RffT"/>
    <property type="match status" value="1"/>
</dbReference>
<dbReference type="InterPro" id="IPR009993">
    <property type="entry name" value="WecF"/>
</dbReference>
<dbReference type="NCBIfam" id="NF002753">
    <property type="entry name" value="PRK02797.1-2"/>
    <property type="match status" value="1"/>
</dbReference>
<dbReference type="NCBIfam" id="NF002754">
    <property type="entry name" value="PRK02797.1-3"/>
    <property type="match status" value="1"/>
</dbReference>
<dbReference type="Pfam" id="PF07429">
    <property type="entry name" value="Glyco_transf_56"/>
    <property type="match status" value="1"/>
</dbReference>
<sequence>MTVLIHVLGSDIPHHNHTVLRFFNDTLAATSEHAREFMVAGEDNGFTESCPALSLRFYGSKKALAQAVIAKAKANRRQRFFFHGQFNTSLWLALLSGGIKPAQFYWHIWGADLYEVSHGLKFRLFYPLRRIAQGRVGGVFATRGDLSYFARQHPGVRGELLYFPTRMDPSLNSMAKERQRAGKLTILVGNSGDRSNEHITALRAVYQQFGDTVNVVVPMGYPANNQAYIDEVRQVGLALFSAENLQILSEKMEFDAYLALLRQCDLGYFIFARQQGIGTLCLLIQADIPCVLNRDNPFWQDMAEQHLPVLFTTDDLNEQVVREAQRQLASVDKSGITFFSPNYLQPWHNALRIAAGEAE</sequence>
<evidence type="ECO:0000255" key="1">
    <source>
        <dbReference type="HAMAP-Rule" id="MF_01002"/>
    </source>
</evidence>
<gene>
    <name evidence="1" type="primary">wecF</name>
    <name evidence="1" type="synonym">rffT</name>
    <name type="ordered locus">SeSA_A4138</name>
</gene>
<accession>B4TNU5</accession>
<feature type="chain" id="PRO_1000134610" description="TDP-N-acetylfucosamine:lipid II N-acetylfucosaminyltransferase">
    <location>
        <begin position="1"/>
        <end position="359"/>
    </location>
</feature>
<comment type="function">
    <text evidence="1">Catalyzes the synthesis of Und-PP-GlcNAc-ManNAcA-Fuc4NAc (Lipid III), the third lipid-linked intermediate involved in ECA synthesis.</text>
</comment>
<comment type="catalytic activity">
    <reaction evidence="1">
        <text>beta-D-ManNAcA-(1-&gt;4)-alpha-D-GlcNAc-di-trans,octa-cis-undecaprenyl diphosphate + dTDP-4-acetamido-4,6-dideoxy-alpha-D-galactose = alpha-D-FucNAc4-(1-&gt;4)-beta-D-ManNAcA-(1-&gt;4)-D-GlcNAc-undecaprenyl diphosphate + dTDP + H(+)</text>
        <dbReference type="Rhea" id="RHEA:28759"/>
        <dbReference type="ChEBI" id="CHEBI:15378"/>
        <dbReference type="ChEBI" id="CHEBI:58369"/>
        <dbReference type="ChEBI" id="CHEBI:61495"/>
        <dbReference type="ChEBI" id="CHEBI:61496"/>
        <dbReference type="ChEBI" id="CHEBI:68493"/>
        <dbReference type="EC" id="2.4.1.325"/>
    </reaction>
</comment>
<comment type="pathway">
    <text evidence="1">Bacterial outer membrane biogenesis; enterobacterial common antigen biosynthesis.</text>
</comment>
<comment type="subcellular location">
    <subcellularLocation>
        <location evidence="1">Cell inner membrane</location>
        <topology evidence="1">Peripheral membrane protein</topology>
    </subcellularLocation>
</comment>
<comment type="similarity">
    <text evidence="1">Belongs to the glycosyltransferase 56 family.</text>
</comment>
<proteinExistence type="inferred from homology"/>
<name>WECF_SALSV</name>
<keyword id="KW-0997">Cell inner membrane</keyword>
<keyword id="KW-1003">Cell membrane</keyword>
<keyword id="KW-0328">Glycosyltransferase</keyword>
<keyword id="KW-0472">Membrane</keyword>
<keyword id="KW-0808">Transferase</keyword>
<reference key="1">
    <citation type="journal article" date="2011" name="J. Bacteriol.">
        <title>Comparative genomics of 28 Salmonella enterica isolates: evidence for CRISPR-mediated adaptive sublineage evolution.</title>
        <authorList>
            <person name="Fricke W.F."/>
            <person name="Mammel M.K."/>
            <person name="McDermott P.F."/>
            <person name="Tartera C."/>
            <person name="White D.G."/>
            <person name="Leclerc J.E."/>
            <person name="Ravel J."/>
            <person name="Cebula T.A."/>
        </authorList>
    </citation>
    <scope>NUCLEOTIDE SEQUENCE [LARGE SCALE GENOMIC DNA]</scope>
    <source>
        <strain>CVM19633</strain>
    </source>
</reference>
<organism>
    <name type="scientific">Salmonella schwarzengrund (strain CVM19633)</name>
    <dbReference type="NCBI Taxonomy" id="439843"/>
    <lineage>
        <taxon>Bacteria</taxon>
        <taxon>Pseudomonadati</taxon>
        <taxon>Pseudomonadota</taxon>
        <taxon>Gammaproteobacteria</taxon>
        <taxon>Enterobacterales</taxon>
        <taxon>Enterobacteriaceae</taxon>
        <taxon>Salmonella</taxon>
    </lineage>
</organism>